<sequence length="162" mass="17774">MLKRCLWLVVTVLFAWQVFNGTAIAAQLDATTRTVALNDQGKNITLSRRQVEDGQRLFNEACASCHAGGITKTNPSLDLSPETLALATPRRDSVAGLVDYMKDPTTYDGEDSIAEIHPSIKSADIYPKMRNLSEQDLTAIAGYILVQPKVQGEKWGGGKIYF</sequence>
<comment type="function">
    <text evidence="1">One of the extrinsic, lumenal subunits of photosystem II (PSII). PSII is a light-driven water plastoquinone oxidoreductase, using light energy to abstract electrons from H(2)O, generating a proton gradient subsequently used for ATP formation. The extrinsic proteins stabilize the structure of photosystem II oxygen-evolving complex (OEC), the ion environment of oxygen evolution and protect the OEC against heat-induced inactivation. Low-potential cytochrome c that plays a role in the OEC of PSII.</text>
</comment>
<comment type="cofactor">
    <cofactor evidence="1">
        <name>heme c</name>
        <dbReference type="ChEBI" id="CHEBI:61717"/>
    </cofactor>
    <text evidence="1">Binds 1 heme c group covalently per subunit.</text>
</comment>
<comment type="subunit">
    <text evidence="1">PSII is composed of 1 copy each of membrane proteins PsbA, PsbB, PsbC, PsbD, PsbE, PsbF, PsbH, PsbI, PsbJ, PsbK, PsbL, PsbM, PsbT, PsbX, PsbY, PsbZ, Psb30/Ycf12, peripheral proteins PsbO, CyanoQ (PsbQ), PsbU, PsbV and a large number of cofactors. It forms dimeric complexes.</text>
</comment>
<comment type="subcellular location">
    <subcellularLocation>
        <location evidence="1">Cellular thylakoid membrane</location>
        <topology evidence="1">Peripheral membrane protein</topology>
        <orientation evidence="1">Lumenal side</orientation>
    </subcellularLocation>
    <text evidence="1">Associated with photosystem II at the lumenal side of the thylakoid membrane.</text>
</comment>
<comment type="similarity">
    <text evidence="1">Belongs to the cytochrome c family. PsbV subfamily.</text>
</comment>
<keyword id="KW-0249">Electron transport</keyword>
<keyword id="KW-0349">Heme</keyword>
<keyword id="KW-0408">Iron</keyword>
<keyword id="KW-0472">Membrane</keyword>
<keyword id="KW-0479">Metal-binding</keyword>
<keyword id="KW-0602">Photosynthesis</keyword>
<keyword id="KW-0604">Photosystem II</keyword>
<keyword id="KW-0732">Signal</keyword>
<keyword id="KW-0793">Thylakoid</keyword>
<keyword id="KW-0813">Transport</keyword>
<dbReference type="EMBL" id="CP001344">
    <property type="protein sequence ID" value="ACL46181.1"/>
    <property type="molecule type" value="Genomic_DNA"/>
</dbReference>
<dbReference type="SMR" id="B8HUH9"/>
<dbReference type="STRING" id="395961.Cyan7425_3864"/>
<dbReference type="KEGG" id="cyn:Cyan7425_3864"/>
<dbReference type="eggNOG" id="COG2010">
    <property type="taxonomic scope" value="Bacteria"/>
</dbReference>
<dbReference type="HOGENOM" id="CLU_104149_1_0_3"/>
<dbReference type="OrthoDB" id="486949at2"/>
<dbReference type="GO" id="GO:0009523">
    <property type="term" value="C:photosystem II"/>
    <property type="evidence" value="ECO:0007669"/>
    <property type="project" value="UniProtKB-KW"/>
</dbReference>
<dbReference type="GO" id="GO:0031676">
    <property type="term" value="C:plasma membrane-derived thylakoid membrane"/>
    <property type="evidence" value="ECO:0007669"/>
    <property type="project" value="UniProtKB-SubCell"/>
</dbReference>
<dbReference type="GO" id="GO:0009055">
    <property type="term" value="F:electron transfer activity"/>
    <property type="evidence" value="ECO:0007669"/>
    <property type="project" value="InterPro"/>
</dbReference>
<dbReference type="GO" id="GO:0020037">
    <property type="term" value="F:heme binding"/>
    <property type="evidence" value="ECO:0007669"/>
    <property type="project" value="InterPro"/>
</dbReference>
<dbReference type="GO" id="GO:0005506">
    <property type="term" value="F:iron ion binding"/>
    <property type="evidence" value="ECO:0007669"/>
    <property type="project" value="InterPro"/>
</dbReference>
<dbReference type="GO" id="GO:0019684">
    <property type="term" value="P:photosynthesis, light reaction"/>
    <property type="evidence" value="ECO:0007669"/>
    <property type="project" value="UniProtKB-UniRule"/>
</dbReference>
<dbReference type="GO" id="GO:0022904">
    <property type="term" value="P:respiratory electron transport chain"/>
    <property type="evidence" value="ECO:0007669"/>
    <property type="project" value="InterPro"/>
</dbReference>
<dbReference type="Gene3D" id="1.10.760.10">
    <property type="entry name" value="Cytochrome c-like domain"/>
    <property type="match status" value="1"/>
</dbReference>
<dbReference type="HAMAP" id="MF_01378">
    <property type="entry name" value="PSII_Cyt550"/>
    <property type="match status" value="1"/>
</dbReference>
<dbReference type="InterPro" id="IPR009056">
    <property type="entry name" value="Cyt_c-like_dom"/>
</dbReference>
<dbReference type="InterPro" id="IPR036909">
    <property type="entry name" value="Cyt_c-like_dom_sf"/>
</dbReference>
<dbReference type="InterPro" id="IPR029490">
    <property type="entry name" value="Cytochrom_C550"/>
</dbReference>
<dbReference type="InterPro" id="IPR017851">
    <property type="entry name" value="PsbV_cyt_c550"/>
</dbReference>
<dbReference type="InterPro" id="IPR016003">
    <property type="entry name" value="PsbV_cyt_c550-like"/>
</dbReference>
<dbReference type="NCBIfam" id="TIGR03045">
    <property type="entry name" value="PS_II_C550"/>
    <property type="match status" value="1"/>
</dbReference>
<dbReference type="Pfam" id="PF14495">
    <property type="entry name" value="Cytochrom_C550"/>
    <property type="match status" value="1"/>
</dbReference>
<dbReference type="PIRSF" id="PIRSF005890">
    <property type="entry name" value="Phot_II_cyt_c550"/>
    <property type="match status" value="1"/>
</dbReference>
<dbReference type="SUPFAM" id="SSF46626">
    <property type="entry name" value="Cytochrome c"/>
    <property type="match status" value="1"/>
</dbReference>
<dbReference type="PROSITE" id="PS51007">
    <property type="entry name" value="CYTC"/>
    <property type="match status" value="1"/>
</dbReference>
<name>CY550_CYAP4</name>
<gene>
    <name evidence="1" type="primary">psbV</name>
    <name type="ordered locus">Cyan7425_3864</name>
</gene>
<proteinExistence type="inferred from homology"/>
<protein>
    <recommendedName>
        <fullName evidence="1">Photosystem II extrinsic protein V</fullName>
        <shortName evidence="1">PsbV</shortName>
    </recommendedName>
    <alternativeName>
        <fullName evidence="1">Cytochrome c-550</fullName>
    </alternativeName>
    <alternativeName>
        <fullName evidence="1">Cytochrome c550</fullName>
    </alternativeName>
    <alternativeName>
        <fullName evidence="1">Low-potential cytochrome c</fullName>
    </alternativeName>
</protein>
<evidence type="ECO:0000255" key="1">
    <source>
        <dbReference type="HAMAP-Rule" id="MF_01378"/>
    </source>
</evidence>
<organism>
    <name type="scientific">Cyanothece sp. (strain PCC 7425 / ATCC 29141)</name>
    <dbReference type="NCBI Taxonomy" id="395961"/>
    <lineage>
        <taxon>Bacteria</taxon>
        <taxon>Bacillati</taxon>
        <taxon>Cyanobacteriota</taxon>
        <taxon>Cyanophyceae</taxon>
        <taxon>Gomontiellales</taxon>
        <taxon>Cyanothecaceae</taxon>
        <taxon>Cyanothece</taxon>
    </lineage>
</organism>
<reference key="1">
    <citation type="journal article" date="2011" name="MBio">
        <title>Novel metabolic attributes of the genus Cyanothece, comprising a group of unicellular nitrogen-fixing Cyanobacteria.</title>
        <authorList>
            <person name="Bandyopadhyay A."/>
            <person name="Elvitigala T."/>
            <person name="Welsh E."/>
            <person name="Stockel J."/>
            <person name="Liberton M."/>
            <person name="Min H."/>
            <person name="Sherman L.A."/>
            <person name="Pakrasi H.B."/>
        </authorList>
    </citation>
    <scope>NUCLEOTIDE SEQUENCE [LARGE SCALE GENOMIC DNA]</scope>
    <source>
        <strain>PCC 7425 / ATCC 29141</strain>
    </source>
</reference>
<accession>B8HUH9</accession>
<feature type="signal peptide" evidence="1">
    <location>
        <begin position="1"/>
        <end position="25"/>
    </location>
</feature>
<feature type="chain" id="PRO_5000429701" description="Photosystem II extrinsic protein V">
    <location>
        <begin position="26"/>
        <end position="162"/>
    </location>
</feature>
<feature type="binding site" description="covalent" evidence="1">
    <location>
        <position position="62"/>
    </location>
    <ligand>
        <name>heme c</name>
        <dbReference type="ChEBI" id="CHEBI:61717"/>
    </ligand>
</feature>
<feature type="binding site" description="covalent" evidence="1">
    <location>
        <position position="65"/>
    </location>
    <ligand>
        <name>heme c</name>
        <dbReference type="ChEBI" id="CHEBI:61717"/>
    </ligand>
</feature>
<feature type="binding site" description="axial binding residue" evidence="1">
    <location>
        <position position="66"/>
    </location>
    <ligand>
        <name>heme c</name>
        <dbReference type="ChEBI" id="CHEBI:61717"/>
    </ligand>
    <ligandPart>
        <name>Fe</name>
        <dbReference type="ChEBI" id="CHEBI:18248"/>
    </ligandPart>
</feature>
<feature type="binding site" description="axial binding residue" evidence="1">
    <location>
        <position position="117"/>
    </location>
    <ligand>
        <name>heme c</name>
        <dbReference type="ChEBI" id="CHEBI:61717"/>
    </ligand>
    <ligandPart>
        <name>Fe</name>
        <dbReference type="ChEBI" id="CHEBI:18248"/>
    </ligandPart>
</feature>